<keyword id="KW-0067">ATP-binding</keyword>
<keyword id="KW-0112">Calmodulin-binding</keyword>
<keyword id="KW-0418">Kinase</keyword>
<keyword id="KW-0547">Nucleotide-binding</keyword>
<keyword id="KW-0597">Phosphoprotein</keyword>
<keyword id="KW-1185">Reference proteome</keyword>
<keyword id="KW-0677">Repeat</keyword>
<keyword id="KW-0723">Serine/threonine-protein kinase</keyword>
<keyword id="KW-0808">Transferase</keyword>
<dbReference type="EC" id="2.7.11.17"/>
<dbReference type="EMBL" id="AF368282">
    <property type="protein sequence ID" value="AAK54157.1"/>
    <property type="molecule type" value="mRNA"/>
</dbReference>
<dbReference type="EMBL" id="DP000009">
    <property type="protein sequence ID" value="ABF96128.1"/>
    <property type="molecule type" value="Genomic_DNA"/>
</dbReference>
<dbReference type="EMBL" id="AP008209">
    <property type="protein sequence ID" value="BAF12093.1"/>
    <property type="status" value="ALT_SEQ"/>
    <property type="molecule type" value="Genomic_DNA"/>
</dbReference>
<dbReference type="EMBL" id="AP014959">
    <property type="status" value="NOT_ANNOTATED_CDS"/>
    <property type="molecule type" value="Genomic_DNA"/>
</dbReference>
<dbReference type="RefSeq" id="XP_015632251.1">
    <property type="nucleotide sequence ID" value="XM_015776765.1"/>
</dbReference>
<dbReference type="SMR" id="Q10KY3"/>
<dbReference type="FunCoup" id="Q10KY3">
    <property type="interactions" value="439"/>
</dbReference>
<dbReference type="IntAct" id="Q10KY3">
    <property type="interactions" value="2"/>
</dbReference>
<dbReference type="MINT" id="Q10KY3"/>
<dbReference type="STRING" id="39947.Q10KY3"/>
<dbReference type="PaxDb" id="39947-Q10KY3"/>
<dbReference type="EnsemblPlants" id="Os03t0366200-01">
    <property type="protein sequence ID" value="Os03t0366200-01"/>
    <property type="gene ID" value="Os03g0366200"/>
</dbReference>
<dbReference type="Gramene" id="Os03t0366200-01">
    <property type="protein sequence ID" value="Os03t0366200-01"/>
    <property type="gene ID" value="Os03g0366200"/>
</dbReference>
<dbReference type="KEGG" id="dosa:Os03g0366200"/>
<dbReference type="eggNOG" id="KOG0032">
    <property type="taxonomic scope" value="Eukaryota"/>
</dbReference>
<dbReference type="InParanoid" id="Q10KY3"/>
<dbReference type="OrthoDB" id="40902at2759"/>
<dbReference type="Proteomes" id="UP000000763">
    <property type="component" value="Chromosome 3"/>
</dbReference>
<dbReference type="Proteomes" id="UP000059680">
    <property type="component" value="Chromosome 3"/>
</dbReference>
<dbReference type="GO" id="GO:0005737">
    <property type="term" value="C:cytoplasm"/>
    <property type="evidence" value="ECO:0000318"/>
    <property type="project" value="GO_Central"/>
</dbReference>
<dbReference type="GO" id="GO:0005634">
    <property type="term" value="C:nucleus"/>
    <property type="evidence" value="ECO:0000318"/>
    <property type="project" value="GO_Central"/>
</dbReference>
<dbReference type="GO" id="GO:0005524">
    <property type="term" value="F:ATP binding"/>
    <property type="evidence" value="ECO:0007669"/>
    <property type="project" value="UniProtKB-KW"/>
</dbReference>
<dbReference type="GO" id="GO:0009931">
    <property type="term" value="F:calcium-dependent protein serine/threonine kinase activity"/>
    <property type="evidence" value="ECO:0000318"/>
    <property type="project" value="GO_Central"/>
</dbReference>
<dbReference type="GO" id="GO:0004683">
    <property type="term" value="F:calcium/calmodulin-dependent protein kinase activity"/>
    <property type="evidence" value="ECO:0000318"/>
    <property type="project" value="GO_Central"/>
</dbReference>
<dbReference type="GO" id="GO:0005516">
    <property type="term" value="F:calmodulin binding"/>
    <property type="evidence" value="ECO:0000318"/>
    <property type="project" value="GO_Central"/>
</dbReference>
<dbReference type="GO" id="GO:0106310">
    <property type="term" value="F:protein serine kinase activity"/>
    <property type="evidence" value="ECO:0007669"/>
    <property type="project" value="RHEA"/>
</dbReference>
<dbReference type="GO" id="GO:0035556">
    <property type="term" value="P:intracellular signal transduction"/>
    <property type="evidence" value="ECO:0000318"/>
    <property type="project" value="GO_Central"/>
</dbReference>
<dbReference type="CDD" id="cd05117">
    <property type="entry name" value="STKc_CAMK"/>
    <property type="match status" value="1"/>
</dbReference>
<dbReference type="FunFam" id="1.10.510.10:FF:001864">
    <property type="entry name" value="Calcium-dependent protein kinase SK5"/>
    <property type="match status" value="1"/>
</dbReference>
<dbReference type="FunFam" id="1.10.238.10:FF:000233">
    <property type="entry name" value="CDPK-related kinase 1"/>
    <property type="match status" value="1"/>
</dbReference>
<dbReference type="FunFam" id="3.30.200.20:FF:000101">
    <property type="entry name" value="CDPK-related kinase 1"/>
    <property type="match status" value="1"/>
</dbReference>
<dbReference type="FunFam" id="1.10.510.10:FF:001294">
    <property type="entry name" value="CDPK-related kinase 3"/>
    <property type="match status" value="1"/>
</dbReference>
<dbReference type="Gene3D" id="1.10.238.10">
    <property type="entry name" value="EF-hand"/>
    <property type="match status" value="2"/>
</dbReference>
<dbReference type="Gene3D" id="3.30.200.20">
    <property type="entry name" value="Phosphorylase Kinase, domain 1"/>
    <property type="match status" value="1"/>
</dbReference>
<dbReference type="Gene3D" id="1.10.510.10">
    <property type="entry name" value="Transferase(Phosphotransferase) domain 1"/>
    <property type="match status" value="1"/>
</dbReference>
<dbReference type="InterPro" id="IPR050205">
    <property type="entry name" value="CDPK_Ser/Thr_kinases"/>
</dbReference>
<dbReference type="InterPro" id="IPR011992">
    <property type="entry name" value="EF-hand-dom_pair"/>
</dbReference>
<dbReference type="InterPro" id="IPR011009">
    <property type="entry name" value="Kinase-like_dom_sf"/>
</dbReference>
<dbReference type="InterPro" id="IPR000719">
    <property type="entry name" value="Prot_kinase_dom"/>
</dbReference>
<dbReference type="InterPro" id="IPR017441">
    <property type="entry name" value="Protein_kinase_ATP_BS"/>
</dbReference>
<dbReference type="InterPro" id="IPR008271">
    <property type="entry name" value="Ser/Thr_kinase_AS"/>
</dbReference>
<dbReference type="PANTHER" id="PTHR24349">
    <property type="entry name" value="SERINE/THREONINE-PROTEIN KINASE"/>
    <property type="match status" value="1"/>
</dbReference>
<dbReference type="Pfam" id="PF00069">
    <property type="entry name" value="Pkinase"/>
    <property type="match status" value="1"/>
</dbReference>
<dbReference type="SMART" id="SM00220">
    <property type="entry name" value="S_TKc"/>
    <property type="match status" value="1"/>
</dbReference>
<dbReference type="SUPFAM" id="SSF47473">
    <property type="entry name" value="EF-hand"/>
    <property type="match status" value="1"/>
</dbReference>
<dbReference type="SUPFAM" id="SSF56112">
    <property type="entry name" value="Protein kinase-like (PK-like)"/>
    <property type="match status" value="1"/>
</dbReference>
<dbReference type="PROSITE" id="PS00107">
    <property type="entry name" value="PROTEIN_KINASE_ATP"/>
    <property type="match status" value="1"/>
</dbReference>
<dbReference type="PROSITE" id="PS50011">
    <property type="entry name" value="PROTEIN_KINASE_DOM"/>
    <property type="match status" value="1"/>
</dbReference>
<dbReference type="PROSITE" id="PS00108">
    <property type="entry name" value="PROTEIN_KINASE_ST"/>
    <property type="match status" value="1"/>
</dbReference>
<proteinExistence type="evidence at protein level"/>
<sequence>MGLCHGKSAAVLEPTVEEEEEGATRVAEAAAAPAKPASPAPSAAAAAAAPAKPGTPKQHKFPFYLPSPLPASSYKGSPANSSVASTPARGGFKRPFPPPSPAKHIRALLARRHGSVKPNEASIPESGEPGVALDKGFGFSRHFAAKYELGREVGRGHFGYTCAATCKKGELKGDDVAVKVIPKAKMTTAIAIEDVRREVRILSSLAGHSNLVQFYDAYEDEENVYIVMELCKGGELLDRILARGGKYSEEDAKVVMRQILSVASFCHLQGVVHRDLKPENFLFSSKDENSAMKVIDFGLSDFVKPDERLNDIVGSAYYVAPEVLHRSYGTEADMWSIGVIVYILLCGSRPFWARTESGIFRAVLKADPSFEEAPWPTLSAEAKDFVRRLLNKDYRKRMTAAQALCHPWIRGTEEVKLPLDMIIYRLMRAYISSSSLRRAALRALAKTLTTDQIYYLREQFELIGPNKSDLITLQNLKTALMKNSTNAMKDSRVVDFVNTISNIQYRKLDFEEFSAAAISVYQMEGLETWEQHARQAYEFFDKEGNRPIVIDELASELGLGPSVPLHVVLQDWIRHPDGKLSFLGFMKLLHGVSSRTIPKT</sequence>
<feature type="chain" id="PRO_0000338447" description="Calcium/calmodulin-dependent serine/threonine-protein kinase 1">
    <location>
        <begin position="1"/>
        <end position="600"/>
    </location>
</feature>
<feature type="domain" description="Protein kinase" evidence="1">
    <location>
        <begin position="147"/>
        <end position="409"/>
    </location>
</feature>
<feature type="region of interest" description="Disordered" evidence="3">
    <location>
        <begin position="1"/>
        <end position="99"/>
    </location>
</feature>
<feature type="compositionally biased region" description="Low complexity" evidence="3">
    <location>
        <begin position="24"/>
        <end position="56"/>
    </location>
</feature>
<feature type="compositionally biased region" description="Polar residues" evidence="3">
    <location>
        <begin position="74"/>
        <end position="85"/>
    </location>
</feature>
<feature type="active site" description="Proton acceptor" evidence="1 2">
    <location>
        <position position="275"/>
    </location>
</feature>
<feature type="binding site" evidence="1">
    <location>
        <begin position="153"/>
        <end position="161"/>
    </location>
    <ligand>
        <name>ATP</name>
        <dbReference type="ChEBI" id="CHEBI:30616"/>
    </ligand>
</feature>
<feature type="binding site" evidence="1">
    <location>
        <position position="179"/>
    </location>
    <ligand>
        <name>ATP</name>
        <dbReference type="ChEBI" id="CHEBI:30616"/>
    </ligand>
</feature>
<feature type="sequence conflict" description="In Ref. 1; AAK54157." evidence="6" ref="1">
    <location>
        <begin position="49"/>
        <end position="51"/>
    </location>
</feature>
<feature type="sequence conflict" description="In Ref. 1; AAK54157." evidence="6" ref="1">
    <original>E</original>
    <variation>G</variation>
    <location>
        <position position="556"/>
    </location>
</feature>
<protein>
    <recommendedName>
        <fullName>Calcium/calmodulin-dependent serine/threonine-protein kinase 1</fullName>
        <ecNumber>2.7.11.17</ecNumber>
    </recommendedName>
    <alternativeName>
        <fullName>Calcium/calmodulin-binding serine/threonine-protein kinase</fullName>
        <shortName>CaM-binding protein kinase</shortName>
    </alternativeName>
    <alternativeName>
        <fullName>OsCBK</fullName>
    </alternativeName>
</protein>
<organism>
    <name type="scientific">Oryza sativa subsp. japonica</name>
    <name type="common">Rice</name>
    <dbReference type="NCBI Taxonomy" id="39947"/>
    <lineage>
        <taxon>Eukaryota</taxon>
        <taxon>Viridiplantae</taxon>
        <taxon>Streptophyta</taxon>
        <taxon>Embryophyta</taxon>
        <taxon>Tracheophyta</taxon>
        <taxon>Spermatophyta</taxon>
        <taxon>Magnoliopsida</taxon>
        <taxon>Liliopsida</taxon>
        <taxon>Poales</taxon>
        <taxon>Poaceae</taxon>
        <taxon>BOP clade</taxon>
        <taxon>Oryzoideae</taxon>
        <taxon>Oryzeae</taxon>
        <taxon>Oryzinae</taxon>
        <taxon>Oryza</taxon>
        <taxon>Oryza sativa</taxon>
    </lineage>
</organism>
<accession>Q10KY3</accession>
<accession>Q0DRP5</accession>
<accession>Q94KC3</accession>
<evidence type="ECO:0000255" key="1">
    <source>
        <dbReference type="PROSITE-ProRule" id="PRU00159"/>
    </source>
</evidence>
<evidence type="ECO:0000255" key="2">
    <source>
        <dbReference type="PROSITE-ProRule" id="PRU10027"/>
    </source>
</evidence>
<evidence type="ECO:0000256" key="3">
    <source>
        <dbReference type="SAM" id="MobiDB-lite"/>
    </source>
</evidence>
<evidence type="ECO:0000269" key="4">
    <source>
    </source>
</evidence>
<evidence type="ECO:0000269" key="5">
    <source>
    </source>
</evidence>
<evidence type="ECO:0000305" key="6"/>
<reference key="1">
    <citation type="journal article" date="2002" name="Biochem. J.">
        <title>Molecular and biochemical characterization of a calcium/calmodulin-binding protein kinase from rice.</title>
        <authorList>
            <person name="Zhang L."/>
            <person name="Liu B.-F."/>
            <person name="Liang S."/>
            <person name="Jones R.L."/>
            <person name="Lu Y.-T."/>
        </authorList>
    </citation>
    <scope>NUCLEOTIDE SEQUENCE [MRNA]</scope>
    <scope>FUNCTION</scope>
    <scope>TISSUE SPECIFICITY</scope>
    <scope>DEVELOPMENTAL STAGE</scope>
    <scope>AUTOPHOSPHORYLATION</scope>
</reference>
<reference key="2">
    <citation type="journal article" date="2005" name="Genome Res.">
        <title>Sequence, annotation, and analysis of synteny between rice chromosome 3 and diverged grass species.</title>
        <authorList>
            <consortium name="The rice chromosome 3 sequencing consortium"/>
            <person name="Buell C.R."/>
            <person name="Yuan Q."/>
            <person name="Ouyang S."/>
            <person name="Liu J."/>
            <person name="Zhu W."/>
            <person name="Wang A."/>
            <person name="Maiti R."/>
            <person name="Haas B."/>
            <person name="Wortman J."/>
            <person name="Pertea M."/>
            <person name="Jones K.M."/>
            <person name="Kim M."/>
            <person name="Overton L."/>
            <person name="Tsitrin T."/>
            <person name="Fadrosh D."/>
            <person name="Bera J."/>
            <person name="Weaver B."/>
            <person name="Jin S."/>
            <person name="Johri S."/>
            <person name="Reardon M."/>
            <person name="Webb K."/>
            <person name="Hill J."/>
            <person name="Moffat K."/>
            <person name="Tallon L."/>
            <person name="Van Aken S."/>
            <person name="Lewis M."/>
            <person name="Utterback T."/>
            <person name="Feldblyum T."/>
            <person name="Zismann V."/>
            <person name="Iobst S."/>
            <person name="Hsiao J."/>
            <person name="de Vazeille A.R."/>
            <person name="Salzberg S.L."/>
            <person name="White O."/>
            <person name="Fraser C.M."/>
            <person name="Yu Y."/>
            <person name="Kim H."/>
            <person name="Rambo T."/>
            <person name="Currie J."/>
            <person name="Collura K."/>
            <person name="Kernodle-Thompson S."/>
            <person name="Wei F."/>
            <person name="Kudrna K."/>
            <person name="Ammiraju J.S.S."/>
            <person name="Luo M."/>
            <person name="Goicoechea J.L."/>
            <person name="Wing R.A."/>
            <person name="Henry D."/>
            <person name="Oates R."/>
            <person name="Palmer M."/>
            <person name="Pries G."/>
            <person name="Saski C."/>
            <person name="Simmons J."/>
            <person name="Soderlund C."/>
            <person name="Nelson W."/>
            <person name="de la Bastide M."/>
            <person name="Spiegel L."/>
            <person name="Nascimento L."/>
            <person name="Huang E."/>
            <person name="Preston R."/>
            <person name="Zutavern T."/>
            <person name="Palmer L."/>
            <person name="O'Shaughnessy A."/>
            <person name="Dike S."/>
            <person name="McCombie W.R."/>
            <person name="Minx P."/>
            <person name="Cordum H."/>
            <person name="Wilson R."/>
            <person name="Jin W."/>
            <person name="Lee H.R."/>
            <person name="Jiang J."/>
            <person name="Jackson S."/>
        </authorList>
    </citation>
    <scope>NUCLEOTIDE SEQUENCE [LARGE SCALE GENOMIC DNA]</scope>
    <source>
        <strain>cv. Nipponbare</strain>
    </source>
</reference>
<reference key="3">
    <citation type="journal article" date="2005" name="Nature">
        <title>The map-based sequence of the rice genome.</title>
        <authorList>
            <consortium name="International rice genome sequencing project (IRGSP)"/>
        </authorList>
    </citation>
    <scope>NUCLEOTIDE SEQUENCE [LARGE SCALE GENOMIC DNA]</scope>
    <source>
        <strain>cv. Nipponbare</strain>
    </source>
</reference>
<reference key="4">
    <citation type="journal article" date="2008" name="Nucleic Acids Res.">
        <title>The rice annotation project database (RAP-DB): 2008 update.</title>
        <authorList>
            <consortium name="The rice annotation project (RAP)"/>
        </authorList>
    </citation>
    <scope>GENOME REANNOTATION</scope>
    <source>
        <strain>cv. Nipponbare</strain>
    </source>
</reference>
<reference key="5">
    <citation type="journal article" date="2013" name="Rice">
        <title>Improvement of the Oryza sativa Nipponbare reference genome using next generation sequence and optical map data.</title>
        <authorList>
            <person name="Kawahara Y."/>
            <person name="de la Bastide M."/>
            <person name="Hamilton J.P."/>
            <person name="Kanamori H."/>
            <person name="McCombie W.R."/>
            <person name="Ouyang S."/>
            <person name="Schwartz D.C."/>
            <person name="Tanaka T."/>
            <person name="Wu J."/>
            <person name="Zhou S."/>
            <person name="Childs K.L."/>
            <person name="Davidson R.M."/>
            <person name="Lin H."/>
            <person name="Quesada-Ocampo L."/>
            <person name="Vaillancourt B."/>
            <person name="Sakai H."/>
            <person name="Lee S.S."/>
            <person name="Kim J."/>
            <person name="Numa H."/>
            <person name="Itoh T."/>
            <person name="Buell C.R."/>
            <person name="Matsumoto T."/>
        </authorList>
    </citation>
    <scope>GENOME REANNOTATION</scope>
    <source>
        <strain>cv. Nipponbare</strain>
    </source>
</reference>
<reference key="6">
    <citation type="journal article" date="2006" name="FEBS Lett.">
        <title>Calmodulin isoform-specific activation of a rice calmodulin-binding kinase conferred by only three amino-acids of OsCaM61.</title>
        <authorList>
            <person name="Li D.-F."/>
            <person name="Li J."/>
            <person name="Ma L."/>
            <person name="Zhang L."/>
            <person name="Lu Y.-T."/>
        </authorList>
    </citation>
    <scope>FUNCTION</scope>
    <scope>ACTIVITY REGULATION</scope>
    <scope>AUTOPHOSPHORYLATION</scope>
</reference>
<gene>
    <name type="primary">CAMK1</name>
    <name type="ordered locus">Os03g0366200</name>
    <name type="ordered locus">LOC_Os03g25070</name>
</gene>
<comment type="function">
    <text evidence="4 5">Possesses kinase activity in vitro.</text>
</comment>
<comment type="catalytic activity">
    <reaction>
        <text>L-seryl-[protein] + ATP = O-phospho-L-seryl-[protein] + ADP + H(+)</text>
        <dbReference type="Rhea" id="RHEA:17989"/>
        <dbReference type="Rhea" id="RHEA-COMP:9863"/>
        <dbReference type="Rhea" id="RHEA-COMP:11604"/>
        <dbReference type="ChEBI" id="CHEBI:15378"/>
        <dbReference type="ChEBI" id="CHEBI:29999"/>
        <dbReference type="ChEBI" id="CHEBI:30616"/>
        <dbReference type="ChEBI" id="CHEBI:83421"/>
        <dbReference type="ChEBI" id="CHEBI:456216"/>
        <dbReference type="EC" id="2.7.11.17"/>
    </reaction>
</comment>
<comment type="catalytic activity">
    <reaction>
        <text>L-threonyl-[protein] + ATP = O-phospho-L-threonyl-[protein] + ADP + H(+)</text>
        <dbReference type="Rhea" id="RHEA:46608"/>
        <dbReference type="Rhea" id="RHEA-COMP:11060"/>
        <dbReference type="Rhea" id="RHEA-COMP:11605"/>
        <dbReference type="ChEBI" id="CHEBI:15378"/>
        <dbReference type="ChEBI" id="CHEBI:30013"/>
        <dbReference type="ChEBI" id="CHEBI:30616"/>
        <dbReference type="ChEBI" id="CHEBI:61977"/>
        <dbReference type="ChEBI" id="CHEBI:456216"/>
        <dbReference type="EC" id="2.7.11.17"/>
    </reaction>
</comment>
<comment type="activity regulation">
    <text evidence="5">Activated by the binding of calmodulin-like protein 1 (CML1) in the presence of Ca(2+).</text>
</comment>
<comment type="tissue specificity">
    <text evidence="4">Highly expressed in roots in the zone of cell division. Expressed in leaf mesophyll cells and at lower levels in mature stems.</text>
</comment>
<comment type="developmental stage">
    <text evidence="4">Expressed at early stages of anther development in sporogenous cells and tapetum of anthers. Expression decreases in tapetum and increases in sporogenous cells at meiosis. At mature pollen stage, expressed in stigma, and then in proembryo after fertilization.</text>
</comment>
<comment type="PTM">
    <text>Autophosphorylated.</text>
</comment>
<comment type="similarity">
    <text evidence="1">Belongs to the protein kinase superfamily. Ser/Thr protein kinase family.</text>
</comment>
<comment type="sequence caution" evidence="6">
    <conflict type="erroneous gene model prediction">
        <sequence resource="EMBL-CDS" id="BAF12093"/>
    </conflict>
</comment>
<name>CAMK1_ORYSJ</name>